<sequence length="172" mass="18631">MDLRHLIQDVPDFPKPGILFRDISPLLRDPDGWDEVMRQLGDLCTELKPDLIVGIESRGFIVGTALATNRKIGFVPVRKPGKLPGDVLGIDYSLEYGSDRLEIHADALQGHPRVLLVDDLLATGGTARATVELIEKAGGDLVGCGFVIELAALGGRQQLPVEIPVKSLIIYS</sequence>
<organism>
    <name type="scientific">Prochlorococcus marinus (strain MIT 9313)</name>
    <dbReference type="NCBI Taxonomy" id="74547"/>
    <lineage>
        <taxon>Bacteria</taxon>
        <taxon>Bacillati</taxon>
        <taxon>Cyanobacteriota</taxon>
        <taxon>Cyanophyceae</taxon>
        <taxon>Synechococcales</taxon>
        <taxon>Prochlorococcaceae</taxon>
        <taxon>Prochlorococcus</taxon>
    </lineage>
</organism>
<comment type="function">
    <text evidence="1">Catalyzes a salvage reaction resulting in the formation of AMP, that is energically less costly than de novo synthesis.</text>
</comment>
<comment type="catalytic activity">
    <reaction evidence="1">
        <text>AMP + diphosphate = 5-phospho-alpha-D-ribose 1-diphosphate + adenine</text>
        <dbReference type="Rhea" id="RHEA:16609"/>
        <dbReference type="ChEBI" id="CHEBI:16708"/>
        <dbReference type="ChEBI" id="CHEBI:33019"/>
        <dbReference type="ChEBI" id="CHEBI:58017"/>
        <dbReference type="ChEBI" id="CHEBI:456215"/>
        <dbReference type="EC" id="2.4.2.7"/>
    </reaction>
</comment>
<comment type="pathway">
    <text evidence="1">Purine metabolism; AMP biosynthesis via salvage pathway; AMP from adenine: step 1/1.</text>
</comment>
<comment type="subunit">
    <text evidence="1">Homodimer.</text>
</comment>
<comment type="subcellular location">
    <subcellularLocation>
        <location evidence="1">Cytoplasm</location>
    </subcellularLocation>
</comment>
<comment type="similarity">
    <text evidence="1">Belongs to the purine/pyrimidine phosphoribosyltransferase family.</text>
</comment>
<accession>Q7V7D8</accession>
<proteinExistence type="inferred from homology"/>
<gene>
    <name evidence="1" type="primary">apt</name>
    <name type="ordered locus">PMT_0810</name>
</gene>
<reference key="1">
    <citation type="journal article" date="2003" name="Nature">
        <title>Genome divergence in two Prochlorococcus ecotypes reflects oceanic niche differentiation.</title>
        <authorList>
            <person name="Rocap G."/>
            <person name="Larimer F.W."/>
            <person name="Lamerdin J.E."/>
            <person name="Malfatti S."/>
            <person name="Chain P."/>
            <person name="Ahlgren N.A."/>
            <person name="Arellano A."/>
            <person name="Coleman M."/>
            <person name="Hauser L."/>
            <person name="Hess W.R."/>
            <person name="Johnson Z.I."/>
            <person name="Land M.L."/>
            <person name="Lindell D."/>
            <person name="Post A.F."/>
            <person name="Regala W."/>
            <person name="Shah M."/>
            <person name="Shaw S.L."/>
            <person name="Steglich C."/>
            <person name="Sullivan M.B."/>
            <person name="Ting C.S."/>
            <person name="Tolonen A."/>
            <person name="Webb E.A."/>
            <person name="Zinser E.R."/>
            <person name="Chisholm S.W."/>
        </authorList>
    </citation>
    <scope>NUCLEOTIDE SEQUENCE [LARGE SCALE GENOMIC DNA]</scope>
    <source>
        <strain>MIT 9313</strain>
    </source>
</reference>
<name>APT_PROMM</name>
<feature type="chain" id="PRO_0000149431" description="Adenine phosphoribosyltransferase">
    <location>
        <begin position="1"/>
        <end position="172"/>
    </location>
</feature>
<evidence type="ECO:0000255" key="1">
    <source>
        <dbReference type="HAMAP-Rule" id="MF_00004"/>
    </source>
</evidence>
<keyword id="KW-0963">Cytoplasm</keyword>
<keyword id="KW-0328">Glycosyltransferase</keyword>
<keyword id="KW-0660">Purine salvage</keyword>
<keyword id="KW-1185">Reference proteome</keyword>
<keyword id="KW-0808">Transferase</keyword>
<protein>
    <recommendedName>
        <fullName evidence="1">Adenine phosphoribosyltransferase</fullName>
        <shortName evidence="1">APRT</shortName>
        <ecNumber evidence="1">2.4.2.7</ecNumber>
    </recommendedName>
</protein>
<dbReference type="EC" id="2.4.2.7" evidence="1"/>
<dbReference type="EMBL" id="BX548175">
    <property type="protein sequence ID" value="CAE20985.1"/>
    <property type="molecule type" value="Genomic_DNA"/>
</dbReference>
<dbReference type="SMR" id="Q7V7D8"/>
<dbReference type="KEGG" id="pmt:PMT_0810"/>
<dbReference type="eggNOG" id="COG0503">
    <property type="taxonomic scope" value="Bacteria"/>
</dbReference>
<dbReference type="HOGENOM" id="CLU_063339_3_0_3"/>
<dbReference type="OrthoDB" id="9803963at2"/>
<dbReference type="UniPathway" id="UPA00588">
    <property type="reaction ID" value="UER00646"/>
</dbReference>
<dbReference type="Proteomes" id="UP000001423">
    <property type="component" value="Chromosome"/>
</dbReference>
<dbReference type="GO" id="GO:0005737">
    <property type="term" value="C:cytoplasm"/>
    <property type="evidence" value="ECO:0007669"/>
    <property type="project" value="UniProtKB-SubCell"/>
</dbReference>
<dbReference type="GO" id="GO:0002055">
    <property type="term" value="F:adenine binding"/>
    <property type="evidence" value="ECO:0007669"/>
    <property type="project" value="TreeGrafter"/>
</dbReference>
<dbReference type="GO" id="GO:0003999">
    <property type="term" value="F:adenine phosphoribosyltransferase activity"/>
    <property type="evidence" value="ECO:0007669"/>
    <property type="project" value="UniProtKB-UniRule"/>
</dbReference>
<dbReference type="GO" id="GO:0016208">
    <property type="term" value="F:AMP binding"/>
    <property type="evidence" value="ECO:0007669"/>
    <property type="project" value="TreeGrafter"/>
</dbReference>
<dbReference type="GO" id="GO:0006168">
    <property type="term" value="P:adenine salvage"/>
    <property type="evidence" value="ECO:0007669"/>
    <property type="project" value="InterPro"/>
</dbReference>
<dbReference type="GO" id="GO:0044209">
    <property type="term" value="P:AMP salvage"/>
    <property type="evidence" value="ECO:0007669"/>
    <property type="project" value="UniProtKB-UniRule"/>
</dbReference>
<dbReference type="GO" id="GO:0006166">
    <property type="term" value="P:purine ribonucleoside salvage"/>
    <property type="evidence" value="ECO:0007669"/>
    <property type="project" value="UniProtKB-KW"/>
</dbReference>
<dbReference type="CDD" id="cd06223">
    <property type="entry name" value="PRTases_typeI"/>
    <property type="match status" value="1"/>
</dbReference>
<dbReference type="FunFam" id="3.40.50.2020:FF:000021">
    <property type="entry name" value="Adenine phosphoribosyltransferase"/>
    <property type="match status" value="1"/>
</dbReference>
<dbReference type="Gene3D" id="3.40.50.2020">
    <property type="match status" value="1"/>
</dbReference>
<dbReference type="HAMAP" id="MF_00004">
    <property type="entry name" value="Aden_phosphoribosyltr"/>
    <property type="match status" value="1"/>
</dbReference>
<dbReference type="InterPro" id="IPR005764">
    <property type="entry name" value="Ade_phspho_trans"/>
</dbReference>
<dbReference type="InterPro" id="IPR000836">
    <property type="entry name" value="PRibTrfase_dom"/>
</dbReference>
<dbReference type="InterPro" id="IPR029057">
    <property type="entry name" value="PRTase-like"/>
</dbReference>
<dbReference type="InterPro" id="IPR050054">
    <property type="entry name" value="UPRTase/APRTase"/>
</dbReference>
<dbReference type="NCBIfam" id="TIGR01090">
    <property type="entry name" value="apt"/>
    <property type="match status" value="1"/>
</dbReference>
<dbReference type="NCBIfam" id="NF002634">
    <property type="entry name" value="PRK02304.1-3"/>
    <property type="match status" value="1"/>
</dbReference>
<dbReference type="NCBIfam" id="NF002636">
    <property type="entry name" value="PRK02304.1-5"/>
    <property type="match status" value="1"/>
</dbReference>
<dbReference type="PANTHER" id="PTHR32315">
    <property type="entry name" value="ADENINE PHOSPHORIBOSYLTRANSFERASE"/>
    <property type="match status" value="1"/>
</dbReference>
<dbReference type="PANTHER" id="PTHR32315:SF3">
    <property type="entry name" value="ADENINE PHOSPHORIBOSYLTRANSFERASE"/>
    <property type="match status" value="1"/>
</dbReference>
<dbReference type="Pfam" id="PF00156">
    <property type="entry name" value="Pribosyltran"/>
    <property type="match status" value="1"/>
</dbReference>
<dbReference type="SUPFAM" id="SSF53271">
    <property type="entry name" value="PRTase-like"/>
    <property type="match status" value="1"/>
</dbReference>
<dbReference type="PROSITE" id="PS00103">
    <property type="entry name" value="PUR_PYR_PR_TRANSFER"/>
    <property type="match status" value="1"/>
</dbReference>